<reference key="1">
    <citation type="journal article" date="2007" name="PLoS ONE">
        <title>Analysis of the neurotoxin complex genes in Clostridium botulinum A1-A4 and B1 strains: BoNT/A3, /Ba4 and /B1 clusters are located within plasmids.</title>
        <authorList>
            <person name="Smith T.J."/>
            <person name="Hill K.K."/>
            <person name="Foley B.T."/>
            <person name="Detter J.C."/>
            <person name="Munk A.C."/>
            <person name="Bruce D.C."/>
            <person name="Doggett N.A."/>
            <person name="Smith L.A."/>
            <person name="Marks J.D."/>
            <person name="Xie G."/>
            <person name="Brettin T.S."/>
        </authorList>
    </citation>
    <scope>NUCLEOTIDE SEQUENCE [LARGE SCALE GENOMIC DNA]</scope>
    <source>
        <strain>Loch Maree / Type A3</strain>
    </source>
</reference>
<proteinExistence type="inferred from homology"/>
<organism>
    <name type="scientific">Clostridium botulinum (strain Loch Maree / Type A3)</name>
    <dbReference type="NCBI Taxonomy" id="498214"/>
    <lineage>
        <taxon>Bacteria</taxon>
        <taxon>Bacillati</taxon>
        <taxon>Bacillota</taxon>
        <taxon>Clostridia</taxon>
        <taxon>Eubacteriales</taxon>
        <taxon>Clostridiaceae</taxon>
        <taxon>Clostridium</taxon>
    </lineage>
</organism>
<name>APT_CLOBM</name>
<evidence type="ECO:0000255" key="1">
    <source>
        <dbReference type="HAMAP-Rule" id="MF_00004"/>
    </source>
</evidence>
<comment type="function">
    <text evidence="1">Catalyzes a salvage reaction resulting in the formation of AMP, that is energically less costly than de novo synthesis.</text>
</comment>
<comment type="catalytic activity">
    <reaction evidence="1">
        <text>AMP + diphosphate = 5-phospho-alpha-D-ribose 1-diphosphate + adenine</text>
        <dbReference type="Rhea" id="RHEA:16609"/>
        <dbReference type="ChEBI" id="CHEBI:16708"/>
        <dbReference type="ChEBI" id="CHEBI:33019"/>
        <dbReference type="ChEBI" id="CHEBI:58017"/>
        <dbReference type="ChEBI" id="CHEBI:456215"/>
        <dbReference type="EC" id="2.4.2.7"/>
    </reaction>
</comment>
<comment type="pathway">
    <text evidence="1">Purine metabolism; AMP biosynthesis via salvage pathway; AMP from adenine: step 1/1.</text>
</comment>
<comment type="subunit">
    <text evidence="1">Homodimer.</text>
</comment>
<comment type="subcellular location">
    <subcellularLocation>
        <location evidence="1">Cytoplasm</location>
    </subcellularLocation>
</comment>
<comment type="similarity">
    <text evidence="1">Belongs to the purine/pyrimidine phosphoribosyltransferase family.</text>
</comment>
<sequence>MNLKEHIRVIENFPKEGISFKDVTTILQDGKVLNYTVDKLAENLKDKKIDKIVGPEARGFLFGTPLAYKLGVGFVPVRKKGKLPYETISCKYDLEYGQDELQIHKDSIKKGDKVAIVDDLLATGGTIASVVKLVEELGGEVVNVSFVIELTDLKGKDKLEGYDINSLVQYNI</sequence>
<protein>
    <recommendedName>
        <fullName evidence="1">Adenine phosphoribosyltransferase</fullName>
        <shortName evidence="1">APRT</shortName>
        <ecNumber evidence="1">2.4.2.7</ecNumber>
    </recommendedName>
</protein>
<accession>B1L0A2</accession>
<gene>
    <name evidence="1" type="primary">apt</name>
    <name type="ordered locus">CLK_2453</name>
</gene>
<feature type="chain" id="PRO_0000334712" description="Adenine phosphoribosyltransferase">
    <location>
        <begin position="1"/>
        <end position="172"/>
    </location>
</feature>
<keyword id="KW-0963">Cytoplasm</keyword>
<keyword id="KW-0328">Glycosyltransferase</keyword>
<keyword id="KW-0660">Purine salvage</keyword>
<keyword id="KW-0808">Transferase</keyword>
<dbReference type="EC" id="2.4.2.7" evidence="1"/>
<dbReference type="EMBL" id="CP000962">
    <property type="protein sequence ID" value="ACA54636.1"/>
    <property type="molecule type" value="Genomic_DNA"/>
</dbReference>
<dbReference type="RefSeq" id="WP_012342715.1">
    <property type="nucleotide sequence ID" value="NC_010520.1"/>
</dbReference>
<dbReference type="SMR" id="B1L0A2"/>
<dbReference type="KEGG" id="cbl:CLK_2453"/>
<dbReference type="HOGENOM" id="CLU_063339_3_0_9"/>
<dbReference type="UniPathway" id="UPA00588">
    <property type="reaction ID" value="UER00646"/>
</dbReference>
<dbReference type="GO" id="GO:0005737">
    <property type="term" value="C:cytoplasm"/>
    <property type="evidence" value="ECO:0007669"/>
    <property type="project" value="UniProtKB-SubCell"/>
</dbReference>
<dbReference type="GO" id="GO:0002055">
    <property type="term" value="F:adenine binding"/>
    <property type="evidence" value="ECO:0007669"/>
    <property type="project" value="TreeGrafter"/>
</dbReference>
<dbReference type="GO" id="GO:0003999">
    <property type="term" value="F:adenine phosphoribosyltransferase activity"/>
    <property type="evidence" value="ECO:0007669"/>
    <property type="project" value="UniProtKB-UniRule"/>
</dbReference>
<dbReference type="GO" id="GO:0016208">
    <property type="term" value="F:AMP binding"/>
    <property type="evidence" value="ECO:0007669"/>
    <property type="project" value="TreeGrafter"/>
</dbReference>
<dbReference type="GO" id="GO:0006168">
    <property type="term" value="P:adenine salvage"/>
    <property type="evidence" value="ECO:0007669"/>
    <property type="project" value="InterPro"/>
</dbReference>
<dbReference type="GO" id="GO:0044209">
    <property type="term" value="P:AMP salvage"/>
    <property type="evidence" value="ECO:0007669"/>
    <property type="project" value="UniProtKB-UniRule"/>
</dbReference>
<dbReference type="GO" id="GO:0006166">
    <property type="term" value="P:purine ribonucleoside salvage"/>
    <property type="evidence" value="ECO:0007669"/>
    <property type="project" value="UniProtKB-KW"/>
</dbReference>
<dbReference type="CDD" id="cd06223">
    <property type="entry name" value="PRTases_typeI"/>
    <property type="match status" value="1"/>
</dbReference>
<dbReference type="FunFam" id="3.40.50.2020:FF:000004">
    <property type="entry name" value="Adenine phosphoribosyltransferase"/>
    <property type="match status" value="1"/>
</dbReference>
<dbReference type="Gene3D" id="3.40.50.2020">
    <property type="match status" value="1"/>
</dbReference>
<dbReference type="HAMAP" id="MF_00004">
    <property type="entry name" value="Aden_phosphoribosyltr"/>
    <property type="match status" value="1"/>
</dbReference>
<dbReference type="InterPro" id="IPR005764">
    <property type="entry name" value="Ade_phspho_trans"/>
</dbReference>
<dbReference type="InterPro" id="IPR000836">
    <property type="entry name" value="PRibTrfase_dom"/>
</dbReference>
<dbReference type="InterPro" id="IPR029057">
    <property type="entry name" value="PRTase-like"/>
</dbReference>
<dbReference type="InterPro" id="IPR050054">
    <property type="entry name" value="UPRTase/APRTase"/>
</dbReference>
<dbReference type="NCBIfam" id="TIGR01090">
    <property type="entry name" value="apt"/>
    <property type="match status" value="1"/>
</dbReference>
<dbReference type="NCBIfam" id="NF002633">
    <property type="entry name" value="PRK02304.1-2"/>
    <property type="match status" value="1"/>
</dbReference>
<dbReference type="NCBIfam" id="NF002634">
    <property type="entry name" value="PRK02304.1-3"/>
    <property type="match status" value="1"/>
</dbReference>
<dbReference type="NCBIfam" id="NF002636">
    <property type="entry name" value="PRK02304.1-5"/>
    <property type="match status" value="1"/>
</dbReference>
<dbReference type="NCBIfam" id="NF009211">
    <property type="entry name" value="PRK12560.1"/>
    <property type="match status" value="1"/>
</dbReference>
<dbReference type="PANTHER" id="PTHR32315">
    <property type="entry name" value="ADENINE PHOSPHORIBOSYLTRANSFERASE"/>
    <property type="match status" value="1"/>
</dbReference>
<dbReference type="PANTHER" id="PTHR32315:SF3">
    <property type="entry name" value="ADENINE PHOSPHORIBOSYLTRANSFERASE"/>
    <property type="match status" value="1"/>
</dbReference>
<dbReference type="Pfam" id="PF00156">
    <property type="entry name" value="Pribosyltran"/>
    <property type="match status" value="1"/>
</dbReference>
<dbReference type="SUPFAM" id="SSF53271">
    <property type="entry name" value="PRTase-like"/>
    <property type="match status" value="1"/>
</dbReference>